<protein>
    <recommendedName>
        <fullName evidence="5">Secreted RxLR effector protein 5</fullName>
    </recommendedName>
</protein>
<dbReference type="EMBL" id="KX010948">
    <property type="protein sequence ID" value="ANC73368.1"/>
    <property type="molecule type" value="mRNA"/>
</dbReference>
<dbReference type="GlyCosmos" id="A0A172M4M8">
    <property type="glycosylation" value="1 site, No reported glycans"/>
</dbReference>
<dbReference type="GO" id="GO:0005576">
    <property type="term" value="C:extracellular region"/>
    <property type="evidence" value="ECO:0007669"/>
    <property type="project" value="UniProtKB-SubCell"/>
</dbReference>
<dbReference type="GO" id="GO:0042025">
    <property type="term" value="C:host cell nucleus"/>
    <property type="evidence" value="ECO:0007669"/>
    <property type="project" value="UniProtKB-SubCell"/>
</dbReference>
<sequence length="268" mass="29910">MRGAFYMAITLFLARSRSATAIDQLDVSQTYLNVGAIGGEGTKLTPKRYLRDGLALSAANEERVKANVLSKSAKTLAAEGEDWLRLSLGTGGHSHPPKSKRKVNLSLAKSKGGISKKVTTPKQRVYKRHFVSIDPRLPGYLKVHQTFRKIFGMPHEMSLTEAVLMYGMVNWKHGSSPATKKIIDSLLRLAERSNLADFERALDPMFVRIASLEEMQNEYFHSLQTMYAKVYAFCHAHPADCTNKKAVSPLERMIKAQRANVILPPVTH</sequence>
<reference key="1">
    <citation type="journal article" date="2016" name="Front. Microbiol.">
        <title>Studying the mechanism of Plasmopara viticola RxLR effectors on suppressing plant immunity.</title>
        <authorList>
            <person name="Xiang J."/>
            <person name="Li X."/>
            <person name="Wu J."/>
            <person name="Yin L."/>
            <person name="Zhang Y."/>
            <person name="Lu J."/>
        </authorList>
    </citation>
    <scope>NUCLEOTIDE SEQUENCE [MRNA]</scope>
    <scope>INDUCTION</scope>
    <scope>FUNCTION</scope>
    <scope>SUBCELLULAR LOCATION</scope>
    <source>
        <strain>ZJ-1-1</strain>
    </source>
</reference>
<reference key="2">
    <citation type="journal article" date="2015" name="Physiol. Mol. Plant Pathol.">
        <title>Characterization of the secretome of Plasmopara viticola by de novo transcriptome analysis.</title>
        <authorList>
            <person name="Yin L."/>
            <person name="Li X."/>
            <person name="Xiang J."/>
            <person name="Qu J."/>
            <person name="Zhang Y."/>
            <person name="Dry I.B."/>
            <person name="Lu J."/>
        </authorList>
    </citation>
    <scope>IDENTIFICATION</scope>
    <scope>INDUCTION</scope>
    <scope>FUNCTION</scope>
    <scope>DOMAIN</scope>
</reference>
<organism>
    <name type="scientific">Plasmopara viticola</name>
    <name type="common">Downy mildew of grapevine</name>
    <name type="synonym">Botrytis viticola</name>
    <dbReference type="NCBI Taxonomy" id="143451"/>
    <lineage>
        <taxon>Eukaryota</taxon>
        <taxon>Sar</taxon>
        <taxon>Stramenopiles</taxon>
        <taxon>Oomycota</taxon>
        <taxon>Peronosporales</taxon>
        <taxon>Peronosporaceae</taxon>
        <taxon>Plasmopara</taxon>
    </lineage>
</organism>
<gene>
    <name evidence="5" type="primary">RxLR5</name>
</gene>
<accession>A0A172M4M8</accession>
<proteinExistence type="evidence at transcript level"/>
<name>RLR5_PLAVT</name>
<feature type="signal peptide" evidence="1">
    <location>
        <begin position="1"/>
        <end position="21"/>
    </location>
</feature>
<feature type="chain" id="PRO_5007999428" description="Secreted RxLR effector protein 5">
    <location>
        <begin position="22"/>
        <end position="268"/>
    </location>
</feature>
<feature type="short sequence motif" description="RxLR-dEER" evidence="7">
    <location>
        <begin position="48"/>
        <end position="63"/>
    </location>
</feature>
<feature type="glycosylation site" description="N-linked (GlcNAc...) asparagine" evidence="2">
    <location>
        <position position="104"/>
    </location>
</feature>
<keyword id="KW-0325">Glycoprotein</keyword>
<keyword id="KW-1048">Host nucleus</keyword>
<keyword id="KW-0964">Secreted</keyword>
<keyword id="KW-0732">Signal</keyword>
<keyword id="KW-0843">Virulence</keyword>
<evidence type="ECO:0000255" key="1"/>
<evidence type="ECO:0000255" key="2">
    <source>
        <dbReference type="PROSITE-ProRule" id="PRU00498"/>
    </source>
</evidence>
<evidence type="ECO:0000269" key="3">
    <source>
    </source>
</evidence>
<evidence type="ECO:0000269" key="4">
    <source ref="2"/>
</evidence>
<evidence type="ECO:0000303" key="5">
    <source ref="2"/>
</evidence>
<evidence type="ECO:0000305" key="6"/>
<evidence type="ECO:0000305" key="7">
    <source ref="2"/>
</evidence>
<comment type="function">
    <text evidence="3 4">Effector that acts as a broad suppressor of cell death to interrupt plant immunity. Inhibits cell death induced by cell death-inducing proteins, including the PAMP elicitor INF1 from P.infestans.</text>
</comment>
<comment type="subcellular location">
    <subcellularLocation>
        <location evidence="3">Secreted</location>
    </subcellularLocation>
    <subcellularLocation>
        <location evidence="3">Host nucleus</location>
    </subcellularLocation>
</comment>
<comment type="induction">
    <text evidence="3 4">Expression is up-regulated at later stages of infection.</text>
</comment>
<comment type="domain">
    <text evidence="7">The RxLR-dEER motif acts to carry the protein into the host cell cytoplasm through binding to cell surface phosphatidylinositol-3-phosphate.</text>
</comment>
<comment type="similarity">
    <text evidence="6">Belongs to the RxLR effector family.</text>
</comment>